<proteinExistence type="evidence at protein level"/>
<comment type="catalytic activity">
    <reaction evidence="2">
        <text>oxaloacetate + acetyl-CoA + H2O = citrate + CoA + H(+)</text>
        <dbReference type="Rhea" id="RHEA:16845"/>
        <dbReference type="ChEBI" id="CHEBI:15377"/>
        <dbReference type="ChEBI" id="CHEBI:15378"/>
        <dbReference type="ChEBI" id="CHEBI:16452"/>
        <dbReference type="ChEBI" id="CHEBI:16947"/>
        <dbReference type="ChEBI" id="CHEBI:57287"/>
        <dbReference type="ChEBI" id="CHEBI:57288"/>
        <dbReference type="EC" id="2.3.3.16"/>
    </reaction>
</comment>
<comment type="pathway">
    <text>Carbohydrate metabolism; tricarboxylic acid cycle; isocitrate from oxaloacetate: step 1/2.</text>
</comment>
<comment type="subunit">
    <text evidence="1">Homohexamer.</text>
</comment>
<comment type="miscellaneous">
    <text evidence="1">Citrate synthase is found in nearly all cells capable of oxidative metabolism.</text>
</comment>
<comment type="similarity">
    <text evidence="4">Belongs to the citrate synthase family.</text>
</comment>
<feature type="chain" id="PRO_0000169948" description="Citrate synthase 1">
    <location>
        <begin position="1"/>
        <end position="431"/>
    </location>
</feature>
<feature type="active site" evidence="2">
    <location>
        <position position="309"/>
    </location>
</feature>
<feature type="active site" evidence="2">
    <location>
        <position position="366"/>
    </location>
</feature>
<feature type="cross-link" description="Isoglutamyl lysine isopeptide (Lys-Gln) (interchain with Q-Cter in protein Pup)" evidence="3">
    <location>
        <position position="328"/>
    </location>
</feature>
<feature type="strand" evidence="5">
    <location>
        <begin position="8"/>
        <end position="10"/>
    </location>
</feature>
<feature type="strand" evidence="5">
    <location>
        <begin position="17"/>
        <end position="19"/>
    </location>
</feature>
<feature type="strand" evidence="5">
    <location>
        <begin position="25"/>
        <end position="27"/>
    </location>
</feature>
<feature type="turn" evidence="5">
    <location>
        <begin position="37"/>
        <end position="39"/>
    </location>
</feature>
<feature type="helix" evidence="5">
    <location>
        <begin position="47"/>
        <end position="49"/>
    </location>
</feature>
<feature type="strand" evidence="5">
    <location>
        <begin position="59"/>
        <end position="63"/>
    </location>
</feature>
<feature type="turn" evidence="5">
    <location>
        <begin position="64"/>
        <end position="67"/>
    </location>
</feature>
<feature type="strand" evidence="5">
    <location>
        <begin position="68"/>
        <end position="71"/>
    </location>
</feature>
<feature type="helix" evidence="5">
    <location>
        <begin position="76"/>
        <end position="82"/>
    </location>
</feature>
<feature type="helix" evidence="5">
    <location>
        <begin position="85"/>
        <end position="94"/>
    </location>
</feature>
<feature type="helix" evidence="5">
    <location>
        <begin position="100"/>
        <end position="111"/>
    </location>
</feature>
<feature type="helix" evidence="5">
    <location>
        <begin position="118"/>
        <end position="122"/>
    </location>
</feature>
<feature type="helix" evidence="5">
    <location>
        <begin position="123"/>
        <end position="126"/>
    </location>
</feature>
<feature type="helix" evidence="5">
    <location>
        <begin position="133"/>
        <end position="147"/>
    </location>
</feature>
<feature type="helix" evidence="5">
    <location>
        <begin position="149"/>
        <end position="151"/>
    </location>
</feature>
<feature type="strand" evidence="5">
    <location>
        <begin position="154"/>
        <end position="156"/>
    </location>
</feature>
<feature type="helix" evidence="5">
    <location>
        <begin position="159"/>
        <end position="182"/>
    </location>
</feature>
<feature type="helix" evidence="5">
    <location>
        <begin position="196"/>
        <end position="205"/>
    </location>
</feature>
<feature type="helix" evidence="5">
    <location>
        <begin position="216"/>
        <end position="229"/>
    </location>
</feature>
<feature type="helix" evidence="5">
    <location>
        <begin position="236"/>
        <end position="246"/>
    </location>
</feature>
<feature type="helix" evidence="5">
    <location>
        <begin position="251"/>
        <end position="262"/>
    </location>
</feature>
<feature type="turn" evidence="5">
    <location>
        <begin position="265"/>
        <end position="269"/>
    </location>
</feature>
<feature type="helix" evidence="5">
    <location>
        <begin position="270"/>
        <end position="281"/>
    </location>
</feature>
<feature type="helix" evidence="5">
    <location>
        <begin position="317"/>
        <end position="329"/>
    </location>
</feature>
<feature type="helix" evidence="5">
    <location>
        <begin position="339"/>
        <end position="348"/>
    </location>
</feature>
<feature type="helix" evidence="5">
    <location>
        <begin position="367"/>
        <end position="375"/>
    </location>
</feature>
<feature type="helix" evidence="5">
    <location>
        <begin position="380"/>
        <end position="382"/>
    </location>
</feature>
<feature type="helix" evidence="5">
    <location>
        <begin position="383"/>
        <end position="403"/>
    </location>
</feature>
<reference key="1">
    <citation type="journal article" date="1998" name="Nature">
        <title>Deciphering the biology of Mycobacterium tuberculosis from the complete genome sequence.</title>
        <authorList>
            <person name="Cole S.T."/>
            <person name="Brosch R."/>
            <person name="Parkhill J."/>
            <person name="Garnier T."/>
            <person name="Churcher C.M."/>
            <person name="Harris D.E."/>
            <person name="Gordon S.V."/>
            <person name="Eiglmeier K."/>
            <person name="Gas S."/>
            <person name="Barry C.E. III"/>
            <person name="Tekaia F."/>
            <person name="Badcock K."/>
            <person name="Basham D."/>
            <person name="Brown D."/>
            <person name="Chillingworth T."/>
            <person name="Connor R."/>
            <person name="Davies R.M."/>
            <person name="Devlin K."/>
            <person name="Feltwell T."/>
            <person name="Gentles S."/>
            <person name="Hamlin N."/>
            <person name="Holroyd S."/>
            <person name="Hornsby T."/>
            <person name="Jagels K."/>
            <person name="Krogh A."/>
            <person name="McLean J."/>
            <person name="Moule S."/>
            <person name="Murphy L.D."/>
            <person name="Oliver S."/>
            <person name="Osborne J."/>
            <person name="Quail M.A."/>
            <person name="Rajandream M.A."/>
            <person name="Rogers J."/>
            <person name="Rutter S."/>
            <person name="Seeger K."/>
            <person name="Skelton S."/>
            <person name="Squares S."/>
            <person name="Squares R."/>
            <person name="Sulston J.E."/>
            <person name="Taylor K."/>
            <person name="Whitehead S."/>
            <person name="Barrell B.G."/>
        </authorList>
    </citation>
    <scope>NUCLEOTIDE SEQUENCE [LARGE SCALE GENOMIC DNA]</scope>
    <source>
        <strain>ATCC 25618 / H37Rv</strain>
    </source>
</reference>
<reference key="2">
    <citation type="journal article" date="2010" name="PLoS ONE">
        <title>Prokaryotic ubiquitin-like protein (Pup) proteome of Mycobacterium tuberculosis.</title>
        <authorList>
            <person name="Festa R.A."/>
            <person name="McAllister F."/>
            <person name="Pearce M.J."/>
            <person name="Mintseris J."/>
            <person name="Burns K.E."/>
            <person name="Gygi S.P."/>
            <person name="Darwin K.H."/>
        </authorList>
    </citation>
    <scope>PUPYLATION AT LYS-328</scope>
    <scope>IDENTIFICATION BY MASS SPECTROMETRY</scope>
    <source>
        <strain>ATCC 25618 / H37Rv</strain>
    </source>
</reference>
<reference key="3">
    <citation type="journal article" date="2011" name="Mol. Cell. Proteomics">
        <title>Proteogenomic analysis of Mycobacterium tuberculosis by high resolution mass spectrometry.</title>
        <authorList>
            <person name="Kelkar D.S."/>
            <person name="Kumar D."/>
            <person name="Kumar P."/>
            <person name="Balakrishnan L."/>
            <person name="Muthusamy B."/>
            <person name="Yadav A.K."/>
            <person name="Shrivastava P."/>
            <person name="Marimuthu A."/>
            <person name="Anand S."/>
            <person name="Sundaram H."/>
            <person name="Kingsbury R."/>
            <person name="Harsha H.C."/>
            <person name="Nair B."/>
            <person name="Prasad T.S."/>
            <person name="Chauhan D.S."/>
            <person name="Katoch K."/>
            <person name="Katoch V.M."/>
            <person name="Kumar P."/>
            <person name="Chaerkady R."/>
            <person name="Ramachandran S."/>
            <person name="Dash D."/>
            <person name="Pandey A."/>
        </authorList>
    </citation>
    <scope>IDENTIFICATION BY MASS SPECTROMETRY [LARGE SCALE ANALYSIS]</scope>
    <source>
        <strain>ATCC 25618 / H37Rv</strain>
    </source>
</reference>
<protein>
    <recommendedName>
        <fullName>Citrate synthase 1</fullName>
        <ecNumber>2.3.3.16</ecNumber>
    </recommendedName>
</protein>
<dbReference type="EC" id="2.3.3.16"/>
<dbReference type="EMBL" id="AL123456">
    <property type="protein sequence ID" value="CCP43644.1"/>
    <property type="molecule type" value="Genomic_DNA"/>
</dbReference>
<dbReference type="PIR" id="E70782">
    <property type="entry name" value="E70782"/>
</dbReference>
<dbReference type="RefSeq" id="NP_215411.1">
    <property type="nucleotide sequence ID" value="NC_000962.3"/>
</dbReference>
<dbReference type="RefSeq" id="WP_003901040.1">
    <property type="nucleotide sequence ID" value="NZ_NVQJ01000001.1"/>
</dbReference>
<dbReference type="PDB" id="4TVM">
    <property type="method" value="X-ray"/>
    <property type="resolution" value="2.60 A"/>
    <property type="chains" value="A=2-431"/>
</dbReference>
<dbReference type="PDBsum" id="4TVM"/>
<dbReference type="SMR" id="P9WPD5"/>
<dbReference type="FunCoup" id="P9WPD5">
    <property type="interactions" value="422"/>
</dbReference>
<dbReference type="STRING" id="83332.Rv0896"/>
<dbReference type="PaxDb" id="83332-Rv0896"/>
<dbReference type="DNASU" id="885208"/>
<dbReference type="GeneID" id="885208"/>
<dbReference type="KEGG" id="mtu:Rv0896"/>
<dbReference type="KEGG" id="mtv:RVBD_0896"/>
<dbReference type="TubercuList" id="Rv0896"/>
<dbReference type="eggNOG" id="COG0372">
    <property type="taxonomic scope" value="Bacteria"/>
</dbReference>
<dbReference type="InParanoid" id="P9WPD5"/>
<dbReference type="OrthoDB" id="9800864at2"/>
<dbReference type="PhylomeDB" id="P9WPD5"/>
<dbReference type="BioCyc" id="MetaCyc:G185E-5050-MONOMER"/>
<dbReference type="BRENDA" id="2.3.3.16">
    <property type="organism ID" value="3445"/>
</dbReference>
<dbReference type="UniPathway" id="UPA00223">
    <property type="reaction ID" value="UER00717"/>
</dbReference>
<dbReference type="EvolutionaryTrace" id="P9WPD5"/>
<dbReference type="Proteomes" id="UP000001584">
    <property type="component" value="Chromosome"/>
</dbReference>
<dbReference type="GO" id="GO:0005829">
    <property type="term" value="C:cytosol"/>
    <property type="evidence" value="ECO:0007005"/>
    <property type="project" value="MTBBASE"/>
</dbReference>
<dbReference type="GO" id="GO:0005886">
    <property type="term" value="C:plasma membrane"/>
    <property type="evidence" value="ECO:0007005"/>
    <property type="project" value="MTBBASE"/>
</dbReference>
<dbReference type="GO" id="GO:0004108">
    <property type="term" value="F:citrate (Si)-synthase activity"/>
    <property type="evidence" value="ECO:0007669"/>
    <property type="project" value="InterPro"/>
</dbReference>
<dbReference type="GO" id="GO:0006099">
    <property type="term" value="P:tricarboxylic acid cycle"/>
    <property type="evidence" value="ECO:0007669"/>
    <property type="project" value="UniProtKB-UniPathway"/>
</dbReference>
<dbReference type="CDD" id="cd06114">
    <property type="entry name" value="EcCS_like"/>
    <property type="match status" value="1"/>
</dbReference>
<dbReference type="FunFam" id="1.10.230.10:FF:000002">
    <property type="entry name" value="Citrate synthase"/>
    <property type="match status" value="1"/>
</dbReference>
<dbReference type="Gene3D" id="2.20.28.60">
    <property type="match status" value="1"/>
</dbReference>
<dbReference type="Gene3D" id="1.10.580.10">
    <property type="entry name" value="Citrate Synthase, domain 1"/>
    <property type="match status" value="1"/>
</dbReference>
<dbReference type="Gene3D" id="1.10.230.10">
    <property type="entry name" value="Cytochrome P450-Terp, domain 2"/>
    <property type="match status" value="1"/>
</dbReference>
<dbReference type="InterPro" id="IPR016142">
    <property type="entry name" value="Citrate_synth-like_lrg_a-sub"/>
</dbReference>
<dbReference type="InterPro" id="IPR016143">
    <property type="entry name" value="Citrate_synth-like_sm_a-sub"/>
</dbReference>
<dbReference type="InterPro" id="IPR002020">
    <property type="entry name" value="Citrate_synthase"/>
</dbReference>
<dbReference type="InterPro" id="IPR019810">
    <property type="entry name" value="Citrate_synthase_AS"/>
</dbReference>
<dbReference type="InterPro" id="IPR024176">
    <property type="entry name" value="Citrate_synthase_bac-typ"/>
</dbReference>
<dbReference type="InterPro" id="IPR036969">
    <property type="entry name" value="Citrate_synthase_sf"/>
</dbReference>
<dbReference type="InterPro" id="IPR010953">
    <property type="entry name" value="Citrate_synthase_typ-I"/>
</dbReference>
<dbReference type="NCBIfam" id="TIGR01798">
    <property type="entry name" value="cit_synth_I"/>
    <property type="match status" value="1"/>
</dbReference>
<dbReference type="NCBIfam" id="NF004126">
    <property type="entry name" value="PRK05614.1"/>
    <property type="match status" value="1"/>
</dbReference>
<dbReference type="PANTHER" id="PTHR42871">
    <property type="entry name" value="CITRATE SYNTHASE"/>
    <property type="match status" value="1"/>
</dbReference>
<dbReference type="PANTHER" id="PTHR42871:SF1">
    <property type="entry name" value="CITRATE SYNTHASE"/>
    <property type="match status" value="1"/>
</dbReference>
<dbReference type="Pfam" id="PF00285">
    <property type="entry name" value="Citrate_synt"/>
    <property type="match status" value="1"/>
</dbReference>
<dbReference type="PIRSF" id="PIRSF001369">
    <property type="entry name" value="Citrate_synth"/>
    <property type="match status" value="1"/>
</dbReference>
<dbReference type="PRINTS" id="PR00143">
    <property type="entry name" value="CITRTSNTHASE"/>
</dbReference>
<dbReference type="SUPFAM" id="SSF48256">
    <property type="entry name" value="Citrate synthase"/>
    <property type="match status" value="1"/>
</dbReference>
<dbReference type="PROSITE" id="PS00480">
    <property type="entry name" value="CITRATE_SYNTHASE"/>
    <property type="match status" value="1"/>
</dbReference>
<accession>P9WPD5</accession>
<accession>L0T6R4</accession>
<accession>Q10530</accession>
<organism>
    <name type="scientific">Mycobacterium tuberculosis (strain ATCC 25618 / H37Rv)</name>
    <dbReference type="NCBI Taxonomy" id="83332"/>
    <lineage>
        <taxon>Bacteria</taxon>
        <taxon>Bacillati</taxon>
        <taxon>Actinomycetota</taxon>
        <taxon>Actinomycetes</taxon>
        <taxon>Mycobacteriales</taxon>
        <taxon>Mycobacteriaceae</taxon>
        <taxon>Mycobacterium</taxon>
        <taxon>Mycobacterium tuberculosis complex</taxon>
    </lineage>
</organism>
<keyword id="KW-0002">3D-structure</keyword>
<keyword id="KW-0021">Allosteric enzyme</keyword>
<keyword id="KW-1017">Isopeptide bond</keyword>
<keyword id="KW-1185">Reference proteome</keyword>
<keyword id="KW-0808">Transferase</keyword>
<keyword id="KW-0816">Tricarboxylic acid cycle</keyword>
<keyword id="KW-0832">Ubl conjugation</keyword>
<gene>
    <name type="primary">gltA2</name>
    <name type="synonym">gltA</name>
    <name type="ordered locus">Rv0896</name>
    <name type="ORF">MTCY31.24</name>
</gene>
<sequence length="431" mass="47978">MADTDDTATLRYPGGEIDLQIVHATEGADGIALGPLLAKTGHTTFDVGFANTAAAKSSITYIDGDAGILRYRGYPIDQLAEKSTFIEVCYLLIYGELPDTDQLAQFTGRIQRHTMLHEDLKRFFDGFPRNAHPMPVLSSVVNALSAYYQDALDPMDNGQVELSTIRLLAKLPTIAAYAYKKSVGQPFLYPDNSLTLVENFLRLTFGFPAEPYQADPEVVRALDMLFILHADHEQNCSTSTVRLVGSSRANLFTSISGGINALWGPLHGGANQAVLEMLEGIRDSGDDVSEFVRKVKNREAGVKLMGFGHRVYKNYDPRARIVKEQADKILAKLGGDDSLLGIAKELEEAALTDDYFIERKLYPNVDFYTGLIYRALGFPTRMFTVLFALGRLPGWIAHWREMHDEGDSKIGRPRQIYTGYTERDYVTIDAR</sequence>
<evidence type="ECO:0000250" key="1"/>
<evidence type="ECO:0000255" key="2">
    <source>
        <dbReference type="PROSITE-ProRule" id="PRU10117"/>
    </source>
</evidence>
<evidence type="ECO:0000269" key="3">
    <source>
    </source>
</evidence>
<evidence type="ECO:0000305" key="4"/>
<evidence type="ECO:0007829" key="5">
    <source>
        <dbReference type="PDB" id="4TVM"/>
    </source>
</evidence>
<name>CISY1_MYCTU</name>